<protein>
    <recommendedName>
        <fullName evidence="1">Chaperonin GroEL 2</fullName>
        <ecNumber evidence="1">5.6.1.7</ecNumber>
    </recommendedName>
    <alternativeName>
        <fullName evidence="1">60 kDa chaperonin 2</fullName>
    </alternativeName>
    <alternativeName>
        <fullName evidence="1">Chaperonin-60 2</fullName>
        <shortName evidence="1">Cpn60 2</shortName>
    </alternativeName>
</protein>
<gene>
    <name evidence="1" type="primary">groEL2</name>
    <name evidence="1" type="synonym">groL2</name>
    <name type="ordered locus">Sfum_2345</name>
</gene>
<proteinExistence type="inferred from homology"/>
<feature type="chain" id="PRO_0000332095" description="Chaperonin GroEL 2">
    <location>
        <begin position="1"/>
        <end position="542"/>
    </location>
</feature>
<feature type="binding site" evidence="1">
    <location>
        <begin position="30"/>
        <end position="33"/>
    </location>
    <ligand>
        <name>ATP</name>
        <dbReference type="ChEBI" id="CHEBI:30616"/>
    </ligand>
</feature>
<feature type="binding site" evidence="1">
    <location>
        <position position="51"/>
    </location>
    <ligand>
        <name>ATP</name>
        <dbReference type="ChEBI" id="CHEBI:30616"/>
    </ligand>
</feature>
<feature type="binding site" evidence="1">
    <location>
        <begin position="87"/>
        <end position="91"/>
    </location>
    <ligand>
        <name>ATP</name>
        <dbReference type="ChEBI" id="CHEBI:30616"/>
    </ligand>
</feature>
<feature type="binding site" evidence="1">
    <location>
        <position position="415"/>
    </location>
    <ligand>
        <name>ATP</name>
        <dbReference type="ChEBI" id="CHEBI:30616"/>
    </ligand>
</feature>
<feature type="binding site" evidence="1">
    <location>
        <position position="494"/>
    </location>
    <ligand>
        <name>ATP</name>
        <dbReference type="ChEBI" id="CHEBI:30616"/>
    </ligand>
</feature>
<reference key="1">
    <citation type="submission" date="2006-10" db="EMBL/GenBank/DDBJ databases">
        <title>Complete sequence of Syntrophobacter fumaroxidans MPOB.</title>
        <authorList>
            <consortium name="US DOE Joint Genome Institute"/>
            <person name="Copeland A."/>
            <person name="Lucas S."/>
            <person name="Lapidus A."/>
            <person name="Barry K."/>
            <person name="Detter J.C."/>
            <person name="Glavina del Rio T."/>
            <person name="Hammon N."/>
            <person name="Israni S."/>
            <person name="Pitluck S."/>
            <person name="Goltsman E.G."/>
            <person name="Martinez M."/>
            <person name="Schmutz J."/>
            <person name="Larimer F."/>
            <person name="Land M."/>
            <person name="Hauser L."/>
            <person name="Kyrpides N."/>
            <person name="Kim E."/>
            <person name="Boone D.R."/>
            <person name="Brockman F."/>
            <person name="Culley D."/>
            <person name="Ferry J."/>
            <person name="Gunsalus R."/>
            <person name="McInerney M.J."/>
            <person name="Morrison M."/>
            <person name="Plugge C."/>
            <person name="Rohlin L."/>
            <person name="Scholten J."/>
            <person name="Sieber J."/>
            <person name="Stams A.J.M."/>
            <person name="Worm P."/>
            <person name="Henstra A.M."/>
            <person name="Richardson P."/>
        </authorList>
    </citation>
    <scope>NUCLEOTIDE SEQUENCE [LARGE SCALE GENOMIC DNA]</scope>
    <source>
        <strain>DSM 10017 / MPOB</strain>
    </source>
</reference>
<comment type="function">
    <text evidence="1">Together with its co-chaperonin GroES, plays an essential role in assisting protein folding. The GroEL-GroES system forms a nano-cage that allows encapsulation of the non-native substrate proteins and provides a physical environment optimized to promote and accelerate protein folding.</text>
</comment>
<comment type="catalytic activity">
    <reaction evidence="1">
        <text>ATP + H2O + a folded polypeptide = ADP + phosphate + an unfolded polypeptide.</text>
        <dbReference type="EC" id="5.6.1.7"/>
    </reaction>
</comment>
<comment type="subunit">
    <text evidence="1">Forms a cylinder of 14 subunits composed of two heptameric rings stacked back-to-back. Interacts with the co-chaperonin GroES.</text>
</comment>
<comment type="subcellular location">
    <subcellularLocation>
        <location evidence="1">Cytoplasm</location>
    </subcellularLocation>
</comment>
<comment type="similarity">
    <text evidence="1">Belongs to the chaperonin (HSP60) family.</text>
</comment>
<dbReference type="EC" id="5.6.1.7" evidence="1"/>
<dbReference type="EMBL" id="CP000478">
    <property type="protein sequence ID" value="ABK18026.1"/>
    <property type="molecule type" value="Genomic_DNA"/>
</dbReference>
<dbReference type="RefSeq" id="WP_011699195.1">
    <property type="nucleotide sequence ID" value="NC_008554.1"/>
</dbReference>
<dbReference type="SMR" id="A0LKS4"/>
<dbReference type="FunCoup" id="A0LKS4">
    <property type="interactions" value="747"/>
</dbReference>
<dbReference type="STRING" id="335543.Sfum_2345"/>
<dbReference type="KEGG" id="sfu:Sfum_2345"/>
<dbReference type="eggNOG" id="COG0459">
    <property type="taxonomic scope" value="Bacteria"/>
</dbReference>
<dbReference type="HOGENOM" id="CLU_016503_3_0_7"/>
<dbReference type="InParanoid" id="A0LKS4"/>
<dbReference type="OrthoDB" id="9766614at2"/>
<dbReference type="Proteomes" id="UP000001784">
    <property type="component" value="Chromosome"/>
</dbReference>
<dbReference type="GO" id="GO:0005737">
    <property type="term" value="C:cytoplasm"/>
    <property type="evidence" value="ECO:0007669"/>
    <property type="project" value="UniProtKB-SubCell"/>
</dbReference>
<dbReference type="GO" id="GO:0005524">
    <property type="term" value="F:ATP binding"/>
    <property type="evidence" value="ECO:0007669"/>
    <property type="project" value="UniProtKB-UniRule"/>
</dbReference>
<dbReference type="GO" id="GO:0140662">
    <property type="term" value="F:ATP-dependent protein folding chaperone"/>
    <property type="evidence" value="ECO:0007669"/>
    <property type="project" value="InterPro"/>
</dbReference>
<dbReference type="GO" id="GO:0016853">
    <property type="term" value="F:isomerase activity"/>
    <property type="evidence" value="ECO:0007669"/>
    <property type="project" value="UniProtKB-KW"/>
</dbReference>
<dbReference type="GO" id="GO:0051082">
    <property type="term" value="F:unfolded protein binding"/>
    <property type="evidence" value="ECO:0007669"/>
    <property type="project" value="UniProtKB-UniRule"/>
</dbReference>
<dbReference type="GO" id="GO:0042026">
    <property type="term" value="P:protein refolding"/>
    <property type="evidence" value="ECO:0007669"/>
    <property type="project" value="UniProtKB-UniRule"/>
</dbReference>
<dbReference type="CDD" id="cd03344">
    <property type="entry name" value="GroEL"/>
    <property type="match status" value="1"/>
</dbReference>
<dbReference type="FunFam" id="3.50.7.10:FF:000001">
    <property type="entry name" value="60 kDa chaperonin"/>
    <property type="match status" value="1"/>
</dbReference>
<dbReference type="Gene3D" id="3.50.7.10">
    <property type="entry name" value="GroEL"/>
    <property type="match status" value="1"/>
</dbReference>
<dbReference type="Gene3D" id="1.10.560.10">
    <property type="entry name" value="GroEL-like equatorial domain"/>
    <property type="match status" value="1"/>
</dbReference>
<dbReference type="Gene3D" id="3.30.260.10">
    <property type="entry name" value="TCP-1-like chaperonin intermediate domain"/>
    <property type="match status" value="1"/>
</dbReference>
<dbReference type="HAMAP" id="MF_00600">
    <property type="entry name" value="CH60"/>
    <property type="match status" value="1"/>
</dbReference>
<dbReference type="InterPro" id="IPR018370">
    <property type="entry name" value="Chaperonin_Cpn60_CS"/>
</dbReference>
<dbReference type="InterPro" id="IPR001844">
    <property type="entry name" value="Cpn60/GroEL"/>
</dbReference>
<dbReference type="InterPro" id="IPR002423">
    <property type="entry name" value="Cpn60/GroEL/TCP-1"/>
</dbReference>
<dbReference type="InterPro" id="IPR027409">
    <property type="entry name" value="GroEL-like_apical_dom_sf"/>
</dbReference>
<dbReference type="InterPro" id="IPR027413">
    <property type="entry name" value="GROEL-like_equatorial_sf"/>
</dbReference>
<dbReference type="InterPro" id="IPR027410">
    <property type="entry name" value="TCP-1-like_intermed_sf"/>
</dbReference>
<dbReference type="NCBIfam" id="TIGR02348">
    <property type="entry name" value="GroEL"/>
    <property type="match status" value="1"/>
</dbReference>
<dbReference type="NCBIfam" id="NF000592">
    <property type="entry name" value="PRK00013.1"/>
    <property type="match status" value="1"/>
</dbReference>
<dbReference type="NCBIfam" id="NF009487">
    <property type="entry name" value="PRK12849.1"/>
    <property type="match status" value="1"/>
</dbReference>
<dbReference type="NCBIfam" id="NF009488">
    <property type="entry name" value="PRK12850.1"/>
    <property type="match status" value="1"/>
</dbReference>
<dbReference type="NCBIfam" id="NF009489">
    <property type="entry name" value="PRK12851.1"/>
    <property type="match status" value="1"/>
</dbReference>
<dbReference type="PANTHER" id="PTHR45633">
    <property type="entry name" value="60 KDA HEAT SHOCK PROTEIN, MITOCHONDRIAL"/>
    <property type="match status" value="1"/>
</dbReference>
<dbReference type="Pfam" id="PF00118">
    <property type="entry name" value="Cpn60_TCP1"/>
    <property type="match status" value="1"/>
</dbReference>
<dbReference type="PRINTS" id="PR00298">
    <property type="entry name" value="CHAPERONIN60"/>
</dbReference>
<dbReference type="SUPFAM" id="SSF52029">
    <property type="entry name" value="GroEL apical domain-like"/>
    <property type="match status" value="1"/>
</dbReference>
<dbReference type="SUPFAM" id="SSF48592">
    <property type="entry name" value="GroEL equatorial domain-like"/>
    <property type="match status" value="1"/>
</dbReference>
<dbReference type="SUPFAM" id="SSF54849">
    <property type="entry name" value="GroEL-intermediate domain like"/>
    <property type="match status" value="1"/>
</dbReference>
<dbReference type="PROSITE" id="PS00296">
    <property type="entry name" value="CHAPERONINS_CPN60"/>
    <property type="match status" value="1"/>
</dbReference>
<sequence length="542" mass="57951">MAVKEIKYYAEAREKIMAGVDTLADAVKVTLGPRGRNVVLEKSWGPPTVTKDGVTVAKEIDLEDKFENMGAQMVKEVASKTSDVAGDGTTTATILAQAIYRAGSKLVSAGHNPMALKRGIELAVAAAVRELRNMSKPTKDQKEIAQVGTISANNDVAIGDIIAEAMNKVGKEGVITVEEAKSMETTLEVVEGMQFDRGYVSPYFVTDPERMEVVLEDPYILINEKKISNMKDLLPVLEQIAKMGAPLLIVAEDVEGEALATLVVNKLRGTLKVSAVKAPGFGDRRKAMLEDLAVLTGGKVVSEDIGVKLENVSLQDLGRAKTVRIDKDNTTIVDGAGARSAIEARVKQIRAQIDETTSDYDREKLQERLAKIVGGVAVVRVGAATETEMKEKKARVEDALNATRAAVEEGIVPGGGVALLRCLPALEKLDLHGEDAFGVKIVMRALEEPVRQIANNAGHEGSVVVQQVKQGTGSHGFNADTEVYEDLSAAGVIDPTKVVRFALQNAASVASLLLTTEAMIAEKPKKQKPAPAMPGAGMEDMY</sequence>
<accession>A0LKS4</accession>
<name>CH602_SYNFM</name>
<keyword id="KW-0067">ATP-binding</keyword>
<keyword id="KW-0143">Chaperone</keyword>
<keyword id="KW-0963">Cytoplasm</keyword>
<keyword id="KW-0413">Isomerase</keyword>
<keyword id="KW-0547">Nucleotide-binding</keyword>
<keyword id="KW-1185">Reference proteome</keyword>
<organism>
    <name type="scientific">Syntrophobacter fumaroxidans (strain DSM 10017 / MPOB)</name>
    <dbReference type="NCBI Taxonomy" id="335543"/>
    <lineage>
        <taxon>Bacteria</taxon>
        <taxon>Pseudomonadati</taxon>
        <taxon>Thermodesulfobacteriota</taxon>
        <taxon>Syntrophobacteria</taxon>
        <taxon>Syntrophobacterales</taxon>
        <taxon>Syntrophobacteraceae</taxon>
        <taxon>Syntrophobacter</taxon>
    </lineage>
</organism>
<evidence type="ECO:0000255" key="1">
    <source>
        <dbReference type="HAMAP-Rule" id="MF_00600"/>
    </source>
</evidence>